<evidence type="ECO:0000269" key="1">
    <source>
    </source>
</evidence>
<evidence type="ECO:0000303" key="2">
    <source>
    </source>
</evidence>
<evidence type="ECO:0000305" key="3">
    <source>
    </source>
</evidence>
<proteinExistence type="predicted"/>
<reference key="1">
    <citation type="journal article" date="2002" name="J. Bacteriol.">
        <title>Glyoxylate regeneration pathway in the methylotroph Methylobacterium extorquens AM1.</title>
        <authorList>
            <person name="Korotkova N."/>
            <person name="Chistoserdova L."/>
            <person name="Kuksa V."/>
            <person name="Lidstrom M.E."/>
        </authorList>
    </citation>
    <scope>NUCLEOTIDE SEQUENCE [GENOMIC DNA]</scope>
    <scope>FUNCTION</scope>
    <scope>DISRUPTION PHENOTYPE</scope>
    <source>
        <strain>ATCC 14718 / DSM 1338 / JCM 2805 / NCIMB 9133 / AM1</strain>
    </source>
</reference>
<reference key="2">
    <citation type="journal article" date="2009" name="PLoS ONE">
        <title>Methylobacterium genome sequences: a reference blueprint to investigate microbial metabolism of C1 compounds from natural and industrial sources.</title>
        <authorList>
            <person name="Vuilleumier S."/>
            <person name="Chistoserdova L."/>
            <person name="Lee M.-C."/>
            <person name="Bringel F."/>
            <person name="Lajus A."/>
            <person name="Zhou Y."/>
            <person name="Gourion B."/>
            <person name="Barbe V."/>
            <person name="Chang J."/>
            <person name="Cruveiller S."/>
            <person name="Dossat C."/>
            <person name="Gillett W."/>
            <person name="Gruffaz C."/>
            <person name="Haugen E."/>
            <person name="Hourcade E."/>
            <person name="Levy R."/>
            <person name="Mangenot S."/>
            <person name="Muller E."/>
            <person name="Nadalig T."/>
            <person name="Pagni M."/>
            <person name="Penny C."/>
            <person name="Peyraud R."/>
            <person name="Robinson D.G."/>
            <person name="Roche D."/>
            <person name="Rouy Z."/>
            <person name="Saenampechek C."/>
            <person name="Salvignol G."/>
            <person name="Vallenet D."/>
            <person name="Wu Z."/>
            <person name="Marx C.J."/>
            <person name="Vorholt J.A."/>
            <person name="Olson M.V."/>
            <person name="Kaul R."/>
            <person name="Weissenbach J."/>
            <person name="Medigue C."/>
            <person name="Lidstrom M.E."/>
        </authorList>
    </citation>
    <scope>NUCLEOTIDE SEQUENCE [LARGE SCALE GENOMIC DNA]</scope>
    <source>
        <strain>ATCC 14718 / DSM 1338 / JCM 2805 / NCIMB 9133 / AM1</strain>
    </source>
</reference>
<protein>
    <recommendedName>
        <fullName>3-hydroxybutyryl-CoA dehydratase</fullName>
        <ecNumber evidence="3">4.2.1.55</ecNumber>
    </recommendedName>
    <alternativeName>
        <fullName evidence="2">R-specific crotonase</fullName>
    </alternativeName>
</protein>
<name>CROR_METEA</name>
<gene>
    <name evidence="2" type="primary">croR</name>
    <name type="ordered locus">MexAM1_META1p3675</name>
</gene>
<accession>C5AZ74</accession>
<accession>Q8RP95</accession>
<organism>
    <name type="scientific">Methylorubrum extorquens (strain ATCC 14718 / DSM 1338 / JCM 2805 / NCIMB 9133 / AM1)</name>
    <name type="common">Methylobacterium extorquens</name>
    <dbReference type="NCBI Taxonomy" id="272630"/>
    <lineage>
        <taxon>Bacteria</taxon>
        <taxon>Pseudomonadati</taxon>
        <taxon>Pseudomonadota</taxon>
        <taxon>Alphaproteobacteria</taxon>
        <taxon>Hyphomicrobiales</taxon>
        <taxon>Methylobacteriaceae</taxon>
        <taxon>Methylorubrum</taxon>
    </lineage>
</organism>
<comment type="function">
    <text evidence="1">Involved in the regeneration of glyoxylate from a molecule of acetyl-CoA.</text>
</comment>
<comment type="catalytic activity">
    <reaction evidence="3">
        <text>(3R)-3-hydroxybutanoyl-CoA = (2E)-butenoyl-CoA + H2O</text>
        <dbReference type="Rhea" id="RHEA:17849"/>
        <dbReference type="ChEBI" id="CHEBI:15377"/>
        <dbReference type="ChEBI" id="CHEBI:57315"/>
        <dbReference type="ChEBI" id="CHEBI:57332"/>
        <dbReference type="EC" id="4.2.1.55"/>
    </reaction>
    <physiologicalReaction direction="left-to-right" evidence="3">
        <dbReference type="Rhea" id="RHEA:17850"/>
    </physiologicalReaction>
</comment>
<comment type="disruption phenotype">
    <text evidence="1">Cells lacking this gene lose the ability to grow on C1 (methanol and methylamine) and C2 (ethanol and ethylamine) compounds.</text>
</comment>
<keyword id="KW-0456">Lyase</keyword>
<keyword id="KW-1185">Reference proteome</keyword>
<sequence>MLPELRVLYFEDLEVGLTEILKKEISSSDVVGFAEITGDRNPIHLSEHFAARTPFGTRIAHGLYTAGLISAVLGTRLPGPGAVYISQTLNFRAPVRIGDIVEVKVEVAELIPERRRARLACTCSVGDEVVLDGEALVKVPKKEEADPLAMRMGGGRA</sequence>
<dbReference type="EC" id="4.2.1.55" evidence="3"/>
<dbReference type="EMBL" id="AF416777">
    <property type="protein sequence ID" value="AAL86732.1"/>
    <property type="molecule type" value="Genomic_DNA"/>
</dbReference>
<dbReference type="EMBL" id="CP001510">
    <property type="protein sequence ID" value="ACS41386.1"/>
    <property type="molecule type" value="Genomic_DNA"/>
</dbReference>
<dbReference type="RefSeq" id="WP_003606989.1">
    <property type="nucleotide sequence ID" value="NC_012808.1"/>
</dbReference>
<dbReference type="SMR" id="C5AZ74"/>
<dbReference type="STRING" id="272630.MexAM1_META1p3675"/>
<dbReference type="GeneID" id="72991085"/>
<dbReference type="KEGG" id="mea:Mex_1p3675"/>
<dbReference type="eggNOG" id="COG2030">
    <property type="taxonomic scope" value="Bacteria"/>
</dbReference>
<dbReference type="HOGENOM" id="CLU_094876_3_3_5"/>
<dbReference type="OrthoDB" id="9800237at2"/>
<dbReference type="Proteomes" id="UP000009081">
    <property type="component" value="Chromosome"/>
</dbReference>
<dbReference type="GO" id="GO:0005835">
    <property type="term" value="C:fatty acid synthase complex"/>
    <property type="evidence" value="ECO:0007669"/>
    <property type="project" value="InterPro"/>
</dbReference>
<dbReference type="GO" id="GO:0019171">
    <property type="term" value="F:(3R)-hydroxyacyl-[acyl-carrier-protein] dehydratase activity"/>
    <property type="evidence" value="ECO:0007669"/>
    <property type="project" value="TreeGrafter"/>
</dbReference>
<dbReference type="GO" id="GO:0018812">
    <property type="term" value="F:3-hydroxyacyl-CoA dehydratase activity"/>
    <property type="evidence" value="ECO:0000315"/>
    <property type="project" value="UniProtKB"/>
</dbReference>
<dbReference type="GO" id="GO:0004312">
    <property type="term" value="F:fatty acid synthase activity"/>
    <property type="evidence" value="ECO:0007669"/>
    <property type="project" value="InterPro"/>
</dbReference>
<dbReference type="GO" id="GO:0006633">
    <property type="term" value="P:fatty acid biosynthetic process"/>
    <property type="evidence" value="ECO:0007669"/>
    <property type="project" value="InterPro"/>
</dbReference>
<dbReference type="GO" id="GO:0046487">
    <property type="term" value="P:glyoxylate metabolic process"/>
    <property type="evidence" value="ECO:0000315"/>
    <property type="project" value="UniProtKB"/>
</dbReference>
<dbReference type="CDD" id="cd03449">
    <property type="entry name" value="R_hydratase"/>
    <property type="match status" value="1"/>
</dbReference>
<dbReference type="FunFam" id="3.10.129.10:FF:000042">
    <property type="entry name" value="MaoC domain protein dehydratase"/>
    <property type="match status" value="1"/>
</dbReference>
<dbReference type="Gene3D" id="3.10.129.10">
    <property type="entry name" value="Hotdog Thioesterase"/>
    <property type="match status" value="1"/>
</dbReference>
<dbReference type="InterPro" id="IPR003965">
    <property type="entry name" value="Fatty_acid_synthase"/>
</dbReference>
<dbReference type="InterPro" id="IPR029069">
    <property type="entry name" value="HotDog_dom_sf"/>
</dbReference>
<dbReference type="InterPro" id="IPR002539">
    <property type="entry name" value="MaoC-like_dom"/>
</dbReference>
<dbReference type="InterPro" id="IPR050965">
    <property type="entry name" value="UPF0336/Enoyl-CoA_hydratase"/>
</dbReference>
<dbReference type="PANTHER" id="PTHR43437:SF3">
    <property type="entry name" value="HYDROXYACYL-THIOESTER DEHYDRATASE TYPE 2, MITOCHONDRIAL"/>
    <property type="match status" value="1"/>
</dbReference>
<dbReference type="PANTHER" id="PTHR43437">
    <property type="entry name" value="HYDROXYACYL-THIOESTER DEHYDRATASE TYPE 2, MITOCHONDRIAL-RELATED"/>
    <property type="match status" value="1"/>
</dbReference>
<dbReference type="Pfam" id="PF01575">
    <property type="entry name" value="MaoC_dehydratas"/>
    <property type="match status" value="1"/>
</dbReference>
<dbReference type="PRINTS" id="PR01483">
    <property type="entry name" value="FASYNTHASE"/>
</dbReference>
<dbReference type="SUPFAM" id="SSF54637">
    <property type="entry name" value="Thioesterase/thiol ester dehydrase-isomerase"/>
    <property type="match status" value="1"/>
</dbReference>
<feature type="chain" id="PRO_0000428883" description="3-hydroxybutyryl-CoA dehydratase">
    <location>
        <begin position="1"/>
        <end position="157"/>
    </location>
</feature>
<feature type="domain" description="MaoC-like">
    <location>
        <begin position="22"/>
        <end position="120"/>
    </location>
</feature>